<evidence type="ECO:0000255" key="1">
    <source>
        <dbReference type="HAMAP-Rule" id="MF_01009"/>
    </source>
</evidence>
<proteinExistence type="inferred from homology"/>
<sequence length="108" mass="11973">MEQFECITVEEAYQKLHQGAAVLVDIRDPQSYAMGHAPQAFHLTNDTLGAFMREHGFDTAVMVMCYHGNSSKGAAQYLLQQGYDAVYSIDGGFEAWHRRFPADVANGA</sequence>
<reference key="1">
    <citation type="journal article" date="2009" name="BMC Genomics">
        <title>Pseudogene accumulation in the evolutionary histories of Salmonella enterica serovars Paratyphi A and Typhi.</title>
        <authorList>
            <person name="Holt K.E."/>
            <person name="Thomson N.R."/>
            <person name="Wain J."/>
            <person name="Langridge G.C."/>
            <person name="Hasan R."/>
            <person name="Bhutta Z.A."/>
            <person name="Quail M.A."/>
            <person name="Norbertczak H."/>
            <person name="Walker D."/>
            <person name="Simmonds M."/>
            <person name="White B."/>
            <person name="Bason N."/>
            <person name="Mungall K."/>
            <person name="Dougan G."/>
            <person name="Parkhill J."/>
        </authorList>
    </citation>
    <scope>NUCLEOTIDE SEQUENCE [LARGE SCALE GENOMIC DNA]</scope>
    <source>
        <strain>AKU_12601</strain>
    </source>
</reference>
<feature type="chain" id="PRO_1000190109" description="Thiosulfate sulfurtransferase GlpE">
    <location>
        <begin position="1"/>
        <end position="108"/>
    </location>
</feature>
<feature type="domain" description="Rhodanese" evidence="1">
    <location>
        <begin position="17"/>
        <end position="105"/>
    </location>
</feature>
<feature type="active site" description="Cysteine persulfide intermediate" evidence="1">
    <location>
        <position position="65"/>
    </location>
</feature>
<protein>
    <recommendedName>
        <fullName evidence="1">Thiosulfate sulfurtransferase GlpE</fullName>
        <ecNumber evidence="1">2.8.1.1</ecNumber>
    </recommendedName>
</protein>
<comment type="function">
    <text evidence="1">Transferase that catalyzes the transfer of sulfur from thiosulfate to thiophilic acceptors such as cyanide or dithiols. May function in a CysM-independent thiosulfate assimilation pathway by catalyzing the conversion of thiosulfate to sulfite, which can then be used for L-cysteine biosynthesis.</text>
</comment>
<comment type="catalytic activity">
    <reaction evidence="1">
        <text>thiosulfate + hydrogen cyanide = thiocyanate + sulfite + 2 H(+)</text>
        <dbReference type="Rhea" id="RHEA:16881"/>
        <dbReference type="ChEBI" id="CHEBI:15378"/>
        <dbReference type="ChEBI" id="CHEBI:17359"/>
        <dbReference type="ChEBI" id="CHEBI:18022"/>
        <dbReference type="ChEBI" id="CHEBI:18407"/>
        <dbReference type="ChEBI" id="CHEBI:33542"/>
        <dbReference type="EC" id="2.8.1.1"/>
    </reaction>
</comment>
<comment type="catalytic activity">
    <reaction evidence="1">
        <text>thiosulfate + [thioredoxin]-dithiol = [thioredoxin]-disulfide + hydrogen sulfide + sulfite + 2 H(+)</text>
        <dbReference type="Rhea" id="RHEA:83859"/>
        <dbReference type="Rhea" id="RHEA-COMP:10698"/>
        <dbReference type="Rhea" id="RHEA-COMP:10700"/>
        <dbReference type="ChEBI" id="CHEBI:15378"/>
        <dbReference type="ChEBI" id="CHEBI:17359"/>
        <dbReference type="ChEBI" id="CHEBI:29919"/>
        <dbReference type="ChEBI" id="CHEBI:29950"/>
        <dbReference type="ChEBI" id="CHEBI:33542"/>
        <dbReference type="ChEBI" id="CHEBI:50058"/>
    </reaction>
</comment>
<comment type="subcellular location">
    <subcellularLocation>
        <location evidence="1">Cytoplasm</location>
    </subcellularLocation>
</comment>
<comment type="similarity">
    <text evidence="1">Belongs to the GlpE family.</text>
</comment>
<dbReference type="EC" id="2.8.1.1" evidence="1"/>
<dbReference type="EMBL" id="FM200053">
    <property type="protein sequence ID" value="CAR61413.1"/>
    <property type="molecule type" value="Genomic_DNA"/>
</dbReference>
<dbReference type="RefSeq" id="WP_000434523.1">
    <property type="nucleotide sequence ID" value="NC_011147.1"/>
</dbReference>
<dbReference type="SMR" id="B5BHH6"/>
<dbReference type="KEGG" id="sek:SSPA3158"/>
<dbReference type="HOGENOM" id="CLU_089574_14_0_6"/>
<dbReference type="Proteomes" id="UP000001869">
    <property type="component" value="Chromosome"/>
</dbReference>
<dbReference type="GO" id="GO:0005737">
    <property type="term" value="C:cytoplasm"/>
    <property type="evidence" value="ECO:0007669"/>
    <property type="project" value="UniProtKB-SubCell"/>
</dbReference>
<dbReference type="GO" id="GO:0004792">
    <property type="term" value="F:thiosulfate-cyanide sulfurtransferase activity"/>
    <property type="evidence" value="ECO:0007669"/>
    <property type="project" value="UniProtKB-UniRule"/>
</dbReference>
<dbReference type="GO" id="GO:0006071">
    <property type="term" value="P:glycerol metabolic process"/>
    <property type="evidence" value="ECO:0007669"/>
    <property type="project" value="UniProtKB-UniRule"/>
</dbReference>
<dbReference type="CDD" id="cd01444">
    <property type="entry name" value="GlpE_ST"/>
    <property type="match status" value="1"/>
</dbReference>
<dbReference type="FunFam" id="3.40.250.10:FF:000007">
    <property type="entry name" value="Thiosulfate sulfurtransferase GlpE"/>
    <property type="match status" value="1"/>
</dbReference>
<dbReference type="Gene3D" id="3.40.250.10">
    <property type="entry name" value="Rhodanese-like domain"/>
    <property type="match status" value="1"/>
</dbReference>
<dbReference type="HAMAP" id="MF_01009">
    <property type="entry name" value="Thiosulf_sulfurtr"/>
    <property type="match status" value="1"/>
</dbReference>
<dbReference type="InterPro" id="IPR050229">
    <property type="entry name" value="GlpE_sulfurtransferase"/>
</dbReference>
<dbReference type="InterPro" id="IPR001763">
    <property type="entry name" value="Rhodanese-like_dom"/>
</dbReference>
<dbReference type="InterPro" id="IPR036873">
    <property type="entry name" value="Rhodanese-like_dom_sf"/>
</dbReference>
<dbReference type="InterPro" id="IPR023695">
    <property type="entry name" value="Thiosulf_sulfurTrfase"/>
</dbReference>
<dbReference type="NCBIfam" id="NF001195">
    <property type="entry name" value="PRK00162.1"/>
    <property type="match status" value="1"/>
</dbReference>
<dbReference type="PANTHER" id="PTHR43031">
    <property type="entry name" value="FAD-DEPENDENT OXIDOREDUCTASE"/>
    <property type="match status" value="1"/>
</dbReference>
<dbReference type="PANTHER" id="PTHR43031:SF6">
    <property type="entry name" value="THIOSULFATE SULFURTRANSFERASE GLPE"/>
    <property type="match status" value="1"/>
</dbReference>
<dbReference type="Pfam" id="PF00581">
    <property type="entry name" value="Rhodanese"/>
    <property type="match status" value="1"/>
</dbReference>
<dbReference type="SMART" id="SM00450">
    <property type="entry name" value="RHOD"/>
    <property type="match status" value="1"/>
</dbReference>
<dbReference type="SUPFAM" id="SSF52821">
    <property type="entry name" value="Rhodanese/Cell cycle control phosphatase"/>
    <property type="match status" value="1"/>
</dbReference>
<dbReference type="PROSITE" id="PS50206">
    <property type="entry name" value="RHODANESE_3"/>
    <property type="match status" value="1"/>
</dbReference>
<organism>
    <name type="scientific">Salmonella paratyphi A (strain AKU_12601)</name>
    <dbReference type="NCBI Taxonomy" id="554290"/>
    <lineage>
        <taxon>Bacteria</taxon>
        <taxon>Pseudomonadati</taxon>
        <taxon>Pseudomonadota</taxon>
        <taxon>Gammaproteobacteria</taxon>
        <taxon>Enterobacterales</taxon>
        <taxon>Enterobacteriaceae</taxon>
        <taxon>Salmonella</taxon>
    </lineage>
</organism>
<accession>B5BHH6</accession>
<gene>
    <name evidence="1" type="primary">glpE</name>
    <name type="ordered locus">SSPA3158</name>
</gene>
<keyword id="KW-0963">Cytoplasm</keyword>
<keyword id="KW-0808">Transferase</keyword>
<name>GLPE_SALPK</name>